<gene>
    <name evidence="5" type="primary">PAE4</name>
    <name evidence="7" type="ordered locus">At3g09405</name>
    <name evidence="8" type="ORF">F3L24.30</name>
</gene>
<name>PAE4_ARATH</name>
<evidence type="ECO:0000250" key="1">
    <source>
        <dbReference type="UniProtKB" id="B9DFR3"/>
    </source>
</evidence>
<evidence type="ECO:0000250" key="2">
    <source>
        <dbReference type="UniProtKB" id="Q6P988"/>
    </source>
</evidence>
<evidence type="ECO:0000255" key="3"/>
<evidence type="ECO:0000255" key="4">
    <source>
        <dbReference type="PROSITE-ProRule" id="PRU00498"/>
    </source>
</evidence>
<evidence type="ECO:0000303" key="5">
    <source>
    </source>
</evidence>
<evidence type="ECO:0000305" key="6"/>
<evidence type="ECO:0000312" key="7">
    <source>
        <dbReference type="Araport" id="AT3G09405"/>
    </source>
</evidence>
<evidence type="ECO:0000312" key="8">
    <source>
        <dbReference type="EMBL" id="AAF14046.1"/>
    </source>
</evidence>
<dbReference type="EC" id="3.1.1.-" evidence="6"/>
<dbReference type="EMBL" id="AC011436">
    <property type="protein sequence ID" value="AAF14046.1"/>
    <property type="molecule type" value="Genomic_DNA"/>
</dbReference>
<dbReference type="EMBL" id="CP002686">
    <property type="protein sequence ID" value="AEE74763.1"/>
    <property type="molecule type" value="Genomic_DNA"/>
</dbReference>
<dbReference type="RefSeq" id="NP_001154601.1">
    <property type="nucleotide sequence ID" value="NM_001161129.2"/>
</dbReference>
<dbReference type="SMR" id="Q9SR23"/>
<dbReference type="FunCoup" id="Q9SR23">
    <property type="interactions" value="10"/>
</dbReference>
<dbReference type="STRING" id="3702.Q9SR23"/>
<dbReference type="ESTHER" id="arath-q9sr23">
    <property type="family name" value="Pectinacetylesterase-Notum"/>
</dbReference>
<dbReference type="GlyCosmos" id="Q9SR23">
    <property type="glycosylation" value="4 sites, No reported glycans"/>
</dbReference>
<dbReference type="GlyGen" id="Q9SR23">
    <property type="glycosylation" value="4 sites"/>
</dbReference>
<dbReference type="PaxDb" id="3702-AT3G09405.1"/>
<dbReference type="ProteomicsDB" id="226047"/>
<dbReference type="EnsemblPlants" id="AT3G09405.1">
    <property type="protein sequence ID" value="AT3G09405.1"/>
    <property type="gene ID" value="AT3G09405"/>
</dbReference>
<dbReference type="GeneID" id="7922320"/>
<dbReference type="Gramene" id="AT3G09405.1">
    <property type="protein sequence ID" value="AT3G09405.1"/>
    <property type="gene ID" value="AT3G09405"/>
</dbReference>
<dbReference type="KEGG" id="ath:AT3G09405"/>
<dbReference type="Araport" id="AT3G09405"/>
<dbReference type="TAIR" id="AT3G09405">
    <property type="gene designation" value="PAE4"/>
</dbReference>
<dbReference type="eggNOG" id="KOG4287">
    <property type="taxonomic scope" value="Eukaryota"/>
</dbReference>
<dbReference type="HOGENOM" id="CLU_031008_0_0_1"/>
<dbReference type="InParanoid" id="Q9SR23"/>
<dbReference type="PhylomeDB" id="Q9SR23"/>
<dbReference type="PRO" id="PR:Q9SR23"/>
<dbReference type="Proteomes" id="UP000006548">
    <property type="component" value="Chromosome 3"/>
</dbReference>
<dbReference type="ExpressionAtlas" id="Q9SR23">
    <property type="expression patterns" value="baseline and differential"/>
</dbReference>
<dbReference type="GO" id="GO:0005576">
    <property type="term" value="C:extracellular region"/>
    <property type="evidence" value="ECO:0007669"/>
    <property type="project" value="UniProtKB-KW"/>
</dbReference>
<dbReference type="GO" id="GO:0016787">
    <property type="term" value="F:hydrolase activity"/>
    <property type="evidence" value="ECO:0007669"/>
    <property type="project" value="UniProtKB-KW"/>
</dbReference>
<dbReference type="GO" id="GO:0071555">
    <property type="term" value="P:cell wall organization"/>
    <property type="evidence" value="ECO:0007669"/>
    <property type="project" value="UniProtKB-KW"/>
</dbReference>
<dbReference type="InterPro" id="IPR029058">
    <property type="entry name" value="AB_hydrolase_fold"/>
</dbReference>
<dbReference type="InterPro" id="IPR004963">
    <property type="entry name" value="PAE/NOTUM"/>
</dbReference>
<dbReference type="PANTHER" id="PTHR21562">
    <property type="entry name" value="NOTUM-RELATED"/>
    <property type="match status" value="1"/>
</dbReference>
<dbReference type="PANTHER" id="PTHR21562:SF83">
    <property type="entry name" value="PECTIN ACETYLESTERASE 4"/>
    <property type="match status" value="1"/>
</dbReference>
<dbReference type="Pfam" id="PF03283">
    <property type="entry name" value="PAE"/>
    <property type="match status" value="1"/>
</dbReference>
<dbReference type="SUPFAM" id="SSF53474">
    <property type="entry name" value="alpha/beta-Hydrolases"/>
    <property type="match status" value="1"/>
</dbReference>
<protein>
    <recommendedName>
        <fullName evidence="5">Pectin acetylesterase 4</fullName>
        <ecNumber evidence="6">3.1.1.-</ecNumber>
    </recommendedName>
</protein>
<proteinExistence type="inferred from homology"/>
<sequence length="409" mass="45749">MVIRSLLQCRTWSKSDWLLASIGIVLIVYSFSLSFNSTSDSIPSVDRSDLVKLKLSSKAKERGAFCLDGSLPGYHFHKGSGSGSNSWLLYLEGGGGCRTIESCSARAMTRLGSSNFFEHEVPFFGVLSSDPSQNPDFFNWNRVMIRYCDGACFSGHPEAEFKNETRLFFRGQLIWEAIMDELLSMGMSHAKRAMLTGCSAGGLSTLIHCDYFRDHLPKDATVKCVSDGGYILNVLDVLGNPTMGSFFHDVVTLQSVDKSLDQNCVAKMEPSKCMFPQESLKNIRTPVFLVNTAYDYWQIQNGLVPDSPDLDERWKICRLNIQECDAAQMKVLHGFRSSLIDAIGEFHVNKEGGMFINSCNSHCQIRESWHSATSTRIENKTIAESVGDWYFNRKPVKLIDCPYPCNASC</sequence>
<comment type="function">
    <text evidence="1">Hydrolyzes acetyl esters in homogalacturonan regions of pectin. In type I primary cell wall, galacturonic acid residues of pectin can be acetylated at the O-2 and O-3 positions. Decreasing the degree of acetylation of pectin gels in vitro alters their physical properties.</text>
</comment>
<comment type="subcellular location">
    <subcellularLocation>
        <location evidence="6">Secreted</location>
        <location evidence="6">Cell wall</location>
    </subcellularLocation>
</comment>
<comment type="similarity">
    <text evidence="6">Belongs to the pectinacetylesterase family.</text>
</comment>
<keyword id="KW-0134">Cell wall</keyword>
<keyword id="KW-0961">Cell wall biogenesis/degradation</keyword>
<keyword id="KW-0325">Glycoprotein</keyword>
<keyword id="KW-0378">Hydrolase</keyword>
<keyword id="KW-1185">Reference proteome</keyword>
<keyword id="KW-0964">Secreted</keyword>
<keyword id="KW-0732">Signal</keyword>
<feature type="signal peptide" evidence="3">
    <location>
        <begin position="1"/>
        <end position="32"/>
    </location>
</feature>
<feature type="chain" id="PRO_0000431769" description="Pectin acetylesterase 4" evidence="3">
    <location>
        <begin position="33"/>
        <end position="409"/>
    </location>
</feature>
<feature type="active site" description="Charge relay system" evidence="2">
    <location>
        <position position="199"/>
    </location>
</feature>
<feature type="active site" description="Charge relay system" evidence="2">
    <location>
        <position position="295"/>
    </location>
</feature>
<feature type="active site" description="Charge relay system" evidence="2">
    <location>
        <position position="362"/>
    </location>
</feature>
<feature type="glycosylation site" description="N-linked (GlcNAc...) asparagine" evidence="4">
    <location>
        <position position="36"/>
    </location>
</feature>
<feature type="glycosylation site" description="N-linked (GlcNAc...) asparagine" evidence="4">
    <location>
        <position position="163"/>
    </location>
</feature>
<feature type="glycosylation site" description="N-linked (GlcNAc...) asparagine" evidence="4">
    <location>
        <position position="379"/>
    </location>
</feature>
<feature type="glycosylation site" description="N-linked (GlcNAc...) asparagine" evidence="4">
    <location>
        <position position="406"/>
    </location>
</feature>
<reference key="1">
    <citation type="journal article" date="2000" name="Nature">
        <title>Sequence and analysis of chromosome 3 of the plant Arabidopsis thaliana.</title>
        <authorList>
            <person name="Salanoubat M."/>
            <person name="Lemcke K."/>
            <person name="Rieger M."/>
            <person name="Ansorge W."/>
            <person name="Unseld M."/>
            <person name="Fartmann B."/>
            <person name="Valle G."/>
            <person name="Bloecker H."/>
            <person name="Perez-Alonso M."/>
            <person name="Obermaier B."/>
            <person name="Delseny M."/>
            <person name="Boutry M."/>
            <person name="Grivell L.A."/>
            <person name="Mache R."/>
            <person name="Puigdomenech P."/>
            <person name="De Simone V."/>
            <person name="Choisne N."/>
            <person name="Artiguenave F."/>
            <person name="Robert C."/>
            <person name="Brottier P."/>
            <person name="Wincker P."/>
            <person name="Cattolico L."/>
            <person name="Weissenbach J."/>
            <person name="Saurin W."/>
            <person name="Quetier F."/>
            <person name="Schaefer M."/>
            <person name="Mueller-Auer S."/>
            <person name="Gabel C."/>
            <person name="Fuchs M."/>
            <person name="Benes V."/>
            <person name="Wurmbach E."/>
            <person name="Drzonek H."/>
            <person name="Erfle H."/>
            <person name="Jordan N."/>
            <person name="Bangert S."/>
            <person name="Wiedelmann R."/>
            <person name="Kranz H."/>
            <person name="Voss H."/>
            <person name="Holland R."/>
            <person name="Brandt P."/>
            <person name="Nyakatura G."/>
            <person name="Vezzi A."/>
            <person name="D'Angelo M."/>
            <person name="Pallavicini A."/>
            <person name="Toppo S."/>
            <person name="Simionati B."/>
            <person name="Conrad A."/>
            <person name="Hornischer K."/>
            <person name="Kauer G."/>
            <person name="Loehnert T.-H."/>
            <person name="Nordsiek G."/>
            <person name="Reichelt J."/>
            <person name="Scharfe M."/>
            <person name="Schoen O."/>
            <person name="Bargues M."/>
            <person name="Terol J."/>
            <person name="Climent J."/>
            <person name="Navarro P."/>
            <person name="Collado C."/>
            <person name="Perez-Perez A."/>
            <person name="Ottenwaelder B."/>
            <person name="Duchemin D."/>
            <person name="Cooke R."/>
            <person name="Laudie M."/>
            <person name="Berger-Llauro C."/>
            <person name="Purnelle B."/>
            <person name="Masuy D."/>
            <person name="de Haan M."/>
            <person name="Maarse A.C."/>
            <person name="Alcaraz J.-P."/>
            <person name="Cottet A."/>
            <person name="Casacuberta E."/>
            <person name="Monfort A."/>
            <person name="Argiriou A."/>
            <person name="Flores M."/>
            <person name="Liguori R."/>
            <person name="Vitale D."/>
            <person name="Mannhaupt G."/>
            <person name="Haase D."/>
            <person name="Schoof H."/>
            <person name="Rudd S."/>
            <person name="Zaccaria P."/>
            <person name="Mewes H.-W."/>
            <person name="Mayer K.F.X."/>
            <person name="Kaul S."/>
            <person name="Town C.D."/>
            <person name="Koo H.L."/>
            <person name="Tallon L.J."/>
            <person name="Jenkins J."/>
            <person name="Rooney T."/>
            <person name="Rizzo M."/>
            <person name="Walts A."/>
            <person name="Utterback T."/>
            <person name="Fujii C.Y."/>
            <person name="Shea T.P."/>
            <person name="Creasy T.H."/>
            <person name="Haas B."/>
            <person name="Maiti R."/>
            <person name="Wu D."/>
            <person name="Peterson J."/>
            <person name="Van Aken S."/>
            <person name="Pai G."/>
            <person name="Militscher J."/>
            <person name="Sellers P."/>
            <person name="Gill J.E."/>
            <person name="Feldblyum T.V."/>
            <person name="Preuss D."/>
            <person name="Lin X."/>
            <person name="Nierman W.C."/>
            <person name="Salzberg S.L."/>
            <person name="White O."/>
            <person name="Venter J.C."/>
            <person name="Fraser C.M."/>
            <person name="Kaneko T."/>
            <person name="Nakamura Y."/>
            <person name="Sato S."/>
            <person name="Kato T."/>
            <person name="Asamizu E."/>
            <person name="Sasamoto S."/>
            <person name="Kimura T."/>
            <person name="Idesawa K."/>
            <person name="Kawashima K."/>
            <person name="Kishida Y."/>
            <person name="Kiyokawa C."/>
            <person name="Kohara M."/>
            <person name="Matsumoto M."/>
            <person name="Matsuno A."/>
            <person name="Muraki A."/>
            <person name="Nakayama S."/>
            <person name="Nakazaki N."/>
            <person name="Shinpo S."/>
            <person name="Takeuchi C."/>
            <person name="Wada T."/>
            <person name="Watanabe A."/>
            <person name="Yamada M."/>
            <person name="Yasuda M."/>
            <person name="Tabata S."/>
        </authorList>
    </citation>
    <scope>NUCLEOTIDE SEQUENCE [LARGE SCALE GENOMIC DNA]</scope>
    <source>
        <strain>cv. Columbia</strain>
    </source>
</reference>
<reference key="2">
    <citation type="journal article" date="2017" name="Plant J.">
        <title>Araport11: a complete reannotation of the Arabidopsis thaliana reference genome.</title>
        <authorList>
            <person name="Cheng C.Y."/>
            <person name="Krishnakumar V."/>
            <person name="Chan A.P."/>
            <person name="Thibaud-Nissen F."/>
            <person name="Schobel S."/>
            <person name="Town C.D."/>
        </authorList>
    </citation>
    <scope>GENOME REANNOTATION</scope>
    <source>
        <strain>cv. Columbia</strain>
    </source>
</reference>
<reference key="3">
    <citation type="journal article" date="2014" name="Planta">
        <title>Identification and functional characterization of the distinct plant pectin esterases PAE8 and PAE9 and their deletion mutants.</title>
        <authorList>
            <person name="de Souza A."/>
            <person name="Hull P.A."/>
            <person name="Gille S."/>
            <person name="Pauly M."/>
        </authorList>
    </citation>
    <scope>GENE FAMILY</scope>
</reference>
<organism>
    <name type="scientific">Arabidopsis thaliana</name>
    <name type="common">Mouse-ear cress</name>
    <dbReference type="NCBI Taxonomy" id="3702"/>
    <lineage>
        <taxon>Eukaryota</taxon>
        <taxon>Viridiplantae</taxon>
        <taxon>Streptophyta</taxon>
        <taxon>Embryophyta</taxon>
        <taxon>Tracheophyta</taxon>
        <taxon>Spermatophyta</taxon>
        <taxon>Magnoliopsida</taxon>
        <taxon>eudicotyledons</taxon>
        <taxon>Gunneridae</taxon>
        <taxon>Pentapetalae</taxon>
        <taxon>rosids</taxon>
        <taxon>malvids</taxon>
        <taxon>Brassicales</taxon>
        <taxon>Brassicaceae</taxon>
        <taxon>Camelineae</taxon>
        <taxon>Arabidopsis</taxon>
    </lineage>
</organism>
<accession>Q9SR23</accession>